<gene>
    <name evidence="1" type="primary">purT</name>
    <name type="ordered locus">PST_1187</name>
</gene>
<keyword id="KW-0067">ATP-binding</keyword>
<keyword id="KW-0436">Ligase</keyword>
<keyword id="KW-0460">Magnesium</keyword>
<keyword id="KW-0479">Metal-binding</keyword>
<keyword id="KW-0547">Nucleotide-binding</keyword>
<keyword id="KW-0658">Purine biosynthesis</keyword>
<keyword id="KW-1185">Reference proteome</keyword>
<reference key="1">
    <citation type="journal article" date="2008" name="Proc. Natl. Acad. Sci. U.S.A.">
        <title>Nitrogen fixation island and rhizosphere competence traits in the genome of root-associated Pseudomonas stutzeri A1501.</title>
        <authorList>
            <person name="Yan Y."/>
            <person name="Yang J."/>
            <person name="Dou Y."/>
            <person name="Chen M."/>
            <person name="Ping S."/>
            <person name="Peng J."/>
            <person name="Lu W."/>
            <person name="Zhang W."/>
            <person name="Yao Z."/>
            <person name="Li H."/>
            <person name="Liu W."/>
            <person name="He S."/>
            <person name="Geng L."/>
            <person name="Zhang X."/>
            <person name="Yang F."/>
            <person name="Yu H."/>
            <person name="Zhan Y."/>
            <person name="Li D."/>
            <person name="Lin Z."/>
            <person name="Wang Y."/>
            <person name="Elmerich C."/>
            <person name="Lin M."/>
            <person name="Jin Q."/>
        </authorList>
    </citation>
    <scope>NUCLEOTIDE SEQUENCE [LARGE SCALE GENOMIC DNA]</scope>
    <source>
        <strain>A1501</strain>
    </source>
</reference>
<sequence>MPRIGTPLSPSATRILLCGCGELGKELVIELQRFGVEVIAVDRYANAPAMQVAHRSHVLDMLDGAALRAVIEQERPHYIVPEIEAIATATLVELEREGYTVIPTARAAQLTMNREGIRRLAAEELGLPTSPYRFADTLDECRAAAMALGFPCLVKPVMSSSGKGQSVLRSDADIDAAWEYAQAGGRAGRGRVIVEGFIDFDYEITLLTVRHAGGTSFCEPVGHRQEKGDYQESWQPQPMAPAALAEAKRIALAVTDALGGRGIFGVELFVKGEQVWFCEISPRPHDTGLVTLVSQDLSEFALHARAILGLPIPVIRQLGPAASAVVLVEGESTQVSFGNLAEVLAEPDTALRLFGKPGVSGQRRMGVALARDTSIDAARQKALRAAAAVKIEL</sequence>
<comment type="function">
    <text evidence="1">Involved in the de novo purine biosynthesis. Catalyzes the transfer of formate to 5-phospho-ribosyl-glycinamide (GAR), producing 5-phospho-ribosyl-N-formylglycinamide (FGAR). Formate is provided by PurU via hydrolysis of 10-formyl-tetrahydrofolate.</text>
</comment>
<comment type="catalytic activity">
    <reaction evidence="1">
        <text>N(1)-(5-phospho-beta-D-ribosyl)glycinamide + formate + ATP = N(2)-formyl-N(1)-(5-phospho-beta-D-ribosyl)glycinamide + ADP + phosphate + H(+)</text>
        <dbReference type="Rhea" id="RHEA:24829"/>
        <dbReference type="ChEBI" id="CHEBI:15378"/>
        <dbReference type="ChEBI" id="CHEBI:15740"/>
        <dbReference type="ChEBI" id="CHEBI:30616"/>
        <dbReference type="ChEBI" id="CHEBI:43474"/>
        <dbReference type="ChEBI" id="CHEBI:143788"/>
        <dbReference type="ChEBI" id="CHEBI:147286"/>
        <dbReference type="ChEBI" id="CHEBI:456216"/>
        <dbReference type="EC" id="6.3.1.21"/>
    </reaction>
    <physiologicalReaction direction="left-to-right" evidence="1">
        <dbReference type="Rhea" id="RHEA:24830"/>
    </physiologicalReaction>
</comment>
<comment type="pathway">
    <text evidence="1">Purine metabolism; IMP biosynthesis via de novo pathway; N(2)-formyl-N(1)-(5-phospho-D-ribosyl)glycinamide from N(1)-(5-phospho-D-ribosyl)glycinamide (formate route): step 1/1.</text>
</comment>
<comment type="subunit">
    <text evidence="1">Homodimer.</text>
</comment>
<comment type="similarity">
    <text evidence="1">Belongs to the PurK/PurT family.</text>
</comment>
<protein>
    <recommendedName>
        <fullName evidence="1">Formate-dependent phosphoribosylglycinamide formyltransferase</fullName>
        <ecNumber evidence="1">6.3.1.21</ecNumber>
    </recommendedName>
    <alternativeName>
        <fullName evidence="1">5'-phosphoribosylglycinamide transformylase 2</fullName>
    </alternativeName>
    <alternativeName>
        <fullName evidence="1">Formate-dependent GAR transformylase</fullName>
    </alternativeName>
    <alternativeName>
        <fullName evidence="1">GAR transformylase 2</fullName>
        <shortName evidence="1">GART 2</shortName>
    </alternativeName>
    <alternativeName>
        <fullName evidence="1">Non-folate glycinamide ribonucleotide transformylase</fullName>
    </alternativeName>
    <alternativeName>
        <fullName evidence="1">Phosphoribosylglycinamide formyltransferase 2</fullName>
    </alternativeName>
</protein>
<organism>
    <name type="scientific">Stutzerimonas stutzeri (strain A1501)</name>
    <name type="common">Pseudomonas stutzeri</name>
    <dbReference type="NCBI Taxonomy" id="379731"/>
    <lineage>
        <taxon>Bacteria</taxon>
        <taxon>Pseudomonadati</taxon>
        <taxon>Pseudomonadota</taxon>
        <taxon>Gammaproteobacteria</taxon>
        <taxon>Pseudomonadales</taxon>
        <taxon>Pseudomonadaceae</taxon>
        <taxon>Stutzerimonas</taxon>
    </lineage>
</organism>
<name>PURT_STUS1</name>
<feature type="chain" id="PRO_0000319214" description="Formate-dependent phosphoribosylglycinamide formyltransferase">
    <location>
        <begin position="1"/>
        <end position="393"/>
    </location>
</feature>
<feature type="domain" description="ATP-grasp" evidence="1">
    <location>
        <begin position="119"/>
        <end position="308"/>
    </location>
</feature>
<feature type="binding site" evidence="1">
    <location>
        <begin position="22"/>
        <end position="23"/>
    </location>
    <ligand>
        <name>N(1)-(5-phospho-beta-D-ribosyl)glycinamide</name>
        <dbReference type="ChEBI" id="CHEBI:143788"/>
    </ligand>
</feature>
<feature type="binding site" evidence="1">
    <location>
        <position position="82"/>
    </location>
    <ligand>
        <name>N(1)-(5-phospho-beta-D-ribosyl)glycinamide</name>
        <dbReference type="ChEBI" id="CHEBI:143788"/>
    </ligand>
</feature>
<feature type="binding site" evidence="1">
    <location>
        <position position="114"/>
    </location>
    <ligand>
        <name>ATP</name>
        <dbReference type="ChEBI" id="CHEBI:30616"/>
    </ligand>
</feature>
<feature type="binding site" evidence="1">
    <location>
        <position position="155"/>
    </location>
    <ligand>
        <name>ATP</name>
        <dbReference type="ChEBI" id="CHEBI:30616"/>
    </ligand>
</feature>
<feature type="binding site" evidence="1">
    <location>
        <begin position="160"/>
        <end position="165"/>
    </location>
    <ligand>
        <name>ATP</name>
        <dbReference type="ChEBI" id="CHEBI:30616"/>
    </ligand>
</feature>
<feature type="binding site" evidence="1">
    <location>
        <begin position="195"/>
        <end position="198"/>
    </location>
    <ligand>
        <name>ATP</name>
        <dbReference type="ChEBI" id="CHEBI:30616"/>
    </ligand>
</feature>
<feature type="binding site" evidence="1">
    <location>
        <position position="203"/>
    </location>
    <ligand>
        <name>ATP</name>
        <dbReference type="ChEBI" id="CHEBI:30616"/>
    </ligand>
</feature>
<feature type="binding site" evidence="1">
    <location>
        <position position="267"/>
    </location>
    <ligand>
        <name>Mg(2+)</name>
        <dbReference type="ChEBI" id="CHEBI:18420"/>
    </ligand>
</feature>
<feature type="binding site" evidence="1">
    <location>
        <position position="279"/>
    </location>
    <ligand>
        <name>Mg(2+)</name>
        <dbReference type="ChEBI" id="CHEBI:18420"/>
    </ligand>
</feature>
<feature type="binding site" evidence="1">
    <location>
        <position position="286"/>
    </location>
    <ligand>
        <name>N(1)-(5-phospho-beta-D-ribosyl)glycinamide</name>
        <dbReference type="ChEBI" id="CHEBI:143788"/>
    </ligand>
</feature>
<feature type="binding site" evidence="1">
    <location>
        <position position="356"/>
    </location>
    <ligand>
        <name>N(1)-(5-phospho-beta-D-ribosyl)glycinamide</name>
        <dbReference type="ChEBI" id="CHEBI:143788"/>
    </ligand>
</feature>
<feature type="binding site" evidence="1">
    <location>
        <begin position="363"/>
        <end position="364"/>
    </location>
    <ligand>
        <name>N(1)-(5-phospho-beta-D-ribosyl)glycinamide</name>
        <dbReference type="ChEBI" id="CHEBI:143788"/>
    </ligand>
</feature>
<proteinExistence type="inferred from homology"/>
<accession>A4VIT1</accession>
<dbReference type="EC" id="6.3.1.21" evidence="1"/>
<dbReference type="EMBL" id="CP000304">
    <property type="protein sequence ID" value="ABP78882.1"/>
    <property type="molecule type" value="Genomic_DNA"/>
</dbReference>
<dbReference type="RefSeq" id="WP_011912369.1">
    <property type="nucleotide sequence ID" value="NC_009434.1"/>
</dbReference>
<dbReference type="SMR" id="A4VIT1"/>
<dbReference type="GeneID" id="66820338"/>
<dbReference type="KEGG" id="psa:PST_1187"/>
<dbReference type="eggNOG" id="COG0027">
    <property type="taxonomic scope" value="Bacteria"/>
</dbReference>
<dbReference type="HOGENOM" id="CLU_011534_1_3_6"/>
<dbReference type="UniPathway" id="UPA00074">
    <property type="reaction ID" value="UER00127"/>
</dbReference>
<dbReference type="Proteomes" id="UP000000233">
    <property type="component" value="Chromosome"/>
</dbReference>
<dbReference type="GO" id="GO:0005829">
    <property type="term" value="C:cytosol"/>
    <property type="evidence" value="ECO:0007669"/>
    <property type="project" value="TreeGrafter"/>
</dbReference>
<dbReference type="GO" id="GO:0005524">
    <property type="term" value="F:ATP binding"/>
    <property type="evidence" value="ECO:0007669"/>
    <property type="project" value="UniProtKB-UniRule"/>
</dbReference>
<dbReference type="GO" id="GO:0000287">
    <property type="term" value="F:magnesium ion binding"/>
    <property type="evidence" value="ECO:0007669"/>
    <property type="project" value="InterPro"/>
</dbReference>
<dbReference type="GO" id="GO:0043815">
    <property type="term" value="F:phosphoribosylglycinamide formyltransferase 2 activity"/>
    <property type="evidence" value="ECO:0007669"/>
    <property type="project" value="UniProtKB-UniRule"/>
</dbReference>
<dbReference type="GO" id="GO:0004644">
    <property type="term" value="F:phosphoribosylglycinamide formyltransferase activity"/>
    <property type="evidence" value="ECO:0007669"/>
    <property type="project" value="InterPro"/>
</dbReference>
<dbReference type="GO" id="GO:0006189">
    <property type="term" value="P:'de novo' IMP biosynthetic process"/>
    <property type="evidence" value="ECO:0007669"/>
    <property type="project" value="UniProtKB-UniRule"/>
</dbReference>
<dbReference type="FunFam" id="3.30.1490.20:FF:000013">
    <property type="entry name" value="Formate-dependent phosphoribosylglycinamide formyltransferase"/>
    <property type="match status" value="1"/>
</dbReference>
<dbReference type="FunFam" id="3.30.470.20:FF:000027">
    <property type="entry name" value="Formate-dependent phosphoribosylglycinamide formyltransferase"/>
    <property type="match status" value="1"/>
</dbReference>
<dbReference type="FunFam" id="3.40.50.20:FF:000007">
    <property type="entry name" value="Formate-dependent phosphoribosylglycinamide formyltransferase"/>
    <property type="match status" value="1"/>
</dbReference>
<dbReference type="Gene3D" id="3.40.50.20">
    <property type="match status" value="1"/>
</dbReference>
<dbReference type="Gene3D" id="3.30.1490.20">
    <property type="entry name" value="ATP-grasp fold, A domain"/>
    <property type="match status" value="1"/>
</dbReference>
<dbReference type="Gene3D" id="3.30.470.20">
    <property type="entry name" value="ATP-grasp fold, B domain"/>
    <property type="match status" value="1"/>
</dbReference>
<dbReference type="HAMAP" id="MF_01643">
    <property type="entry name" value="PurT"/>
    <property type="match status" value="1"/>
</dbReference>
<dbReference type="InterPro" id="IPR011761">
    <property type="entry name" value="ATP-grasp"/>
</dbReference>
<dbReference type="InterPro" id="IPR003135">
    <property type="entry name" value="ATP-grasp_carboxylate-amine"/>
</dbReference>
<dbReference type="InterPro" id="IPR013815">
    <property type="entry name" value="ATP_grasp_subdomain_1"/>
</dbReference>
<dbReference type="InterPro" id="IPR016185">
    <property type="entry name" value="PreATP-grasp_dom_sf"/>
</dbReference>
<dbReference type="InterPro" id="IPR005862">
    <property type="entry name" value="PurT"/>
</dbReference>
<dbReference type="InterPro" id="IPR054350">
    <property type="entry name" value="PurT/PurK_preATP-grasp"/>
</dbReference>
<dbReference type="InterPro" id="IPR048740">
    <property type="entry name" value="PurT_C"/>
</dbReference>
<dbReference type="NCBIfam" id="NF006766">
    <property type="entry name" value="PRK09288.1"/>
    <property type="match status" value="1"/>
</dbReference>
<dbReference type="NCBIfam" id="TIGR01142">
    <property type="entry name" value="purT"/>
    <property type="match status" value="1"/>
</dbReference>
<dbReference type="PANTHER" id="PTHR43055">
    <property type="entry name" value="FORMATE-DEPENDENT PHOSPHORIBOSYLGLYCINAMIDE FORMYLTRANSFERASE"/>
    <property type="match status" value="1"/>
</dbReference>
<dbReference type="PANTHER" id="PTHR43055:SF1">
    <property type="entry name" value="FORMATE-DEPENDENT PHOSPHORIBOSYLGLYCINAMIDE FORMYLTRANSFERASE"/>
    <property type="match status" value="1"/>
</dbReference>
<dbReference type="Pfam" id="PF02222">
    <property type="entry name" value="ATP-grasp"/>
    <property type="match status" value="1"/>
</dbReference>
<dbReference type="Pfam" id="PF21244">
    <property type="entry name" value="PurT_C"/>
    <property type="match status" value="1"/>
</dbReference>
<dbReference type="Pfam" id="PF22660">
    <property type="entry name" value="RS_preATP-grasp-like"/>
    <property type="match status" value="1"/>
</dbReference>
<dbReference type="SUPFAM" id="SSF56059">
    <property type="entry name" value="Glutathione synthetase ATP-binding domain-like"/>
    <property type="match status" value="1"/>
</dbReference>
<dbReference type="SUPFAM" id="SSF52440">
    <property type="entry name" value="PreATP-grasp domain"/>
    <property type="match status" value="1"/>
</dbReference>
<dbReference type="PROSITE" id="PS50975">
    <property type="entry name" value="ATP_GRASP"/>
    <property type="match status" value="1"/>
</dbReference>
<evidence type="ECO:0000255" key="1">
    <source>
        <dbReference type="HAMAP-Rule" id="MF_01643"/>
    </source>
</evidence>